<keyword id="KW-0119">Carbohydrate metabolism</keyword>
<keyword id="KW-0448">Lipopolysaccharide biosynthesis</keyword>
<keyword id="KW-0460">Magnesium</keyword>
<keyword id="KW-0479">Metal-binding</keyword>
<keyword id="KW-0520">NAD</keyword>
<keyword id="KW-0521">NADP</keyword>
<keyword id="KW-0560">Oxidoreductase</keyword>
<sequence>MNILLFGKTGQVGWELQRALAPLGNLIALDVHSTDYCGDFSNPEGVAETVKKIRPDVIVNAAAHTDVDKAESEPEFAQLLNATSVEAIAKAANEVGAWVIHYSTDYVFPGTGEIPWQGGTDATAPLNVYGETKLSSEKKALQKHCGKHIIFRTSWVYAGKGNNFAKTMLRLAKEREELAVINDQFGRPTGAELLADCTAHAIRVAVDKPEVAGLYHLVAGGTTTWHDYAALVFEEARKAGINLALNKLNAVPTTAYPTPARRPHNSRLNTEKFQQNFALVLPDWQVGVKRMLNELFTTTAI</sequence>
<evidence type="ECO:0000250" key="1">
    <source>
        <dbReference type="UniProtKB" id="P26392"/>
    </source>
</evidence>
<evidence type="ECO:0000269" key="2">
    <source>
    </source>
</evidence>
<evidence type="ECO:0000303" key="3">
    <source>
    </source>
</evidence>
<evidence type="ECO:0000305" key="4"/>
<evidence type="ECO:0000305" key="5">
    <source>
    </source>
</evidence>
<feature type="chain" id="PRO_0000207985" description="dTDP-4-dehydrorhamnose reductase">
    <location>
        <begin position="1"/>
        <end position="301"/>
    </location>
</feature>
<feature type="active site" description="Proton donor/acceptor" evidence="1">
    <location>
        <position position="129"/>
    </location>
</feature>
<feature type="binding site" evidence="1">
    <location>
        <begin position="10"/>
        <end position="12"/>
    </location>
    <ligand>
        <name>NADH</name>
        <dbReference type="ChEBI" id="CHEBI:57945"/>
    </ligand>
</feature>
<feature type="binding site" evidence="1">
    <location>
        <begin position="11"/>
        <end position="12"/>
    </location>
    <ligand>
        <name>NADPH</name>
        <dbReference type="ChEBI" id="CHEBI:57783"/>
    </ligand>
</feature>
<feature type="binding site" evidence="1">
    <location>
        <position position="30"/>
    </location>
    <ligand>
        <name>NADH</name>
        <dbReference type="ChEBI" id="CHEBI:57945"/>
    </ligand>
</feature>
<feature type="binding site" evidence="1">
    <location>
        <begin position="39"/>
        <end position="40"/>
    </location>
    <ligand>
        <name>NADH</name>
        <dbReference type="ChEBI" id="CHEBI:57945"/>
    </ligand>
</feature>
<feature type="binding site" evidence="1">
    <location>
        <begin position="39"/>
        <end position="40"/>
    </location>
    <ligand>
        <name>NADPH</name>
        <dbReference type="ChEBI" id="CHEBI:57783"/>
    </ligand>
</feature>
<feature type="binding site" evidence="1">
    <location>
        <begin position="63"/>
        <end position="65"/>
    </location>
    <ligand>
        <name>NADH</name>
        <dbReference type="ChEBI" id="CHEBI:57945"/>
    </ligand>
</feature>
<feature type="binding site" evidence="1">
    <location>
        <begin position="63"/>
        <end position="65"/>
    </location>
    <ligand>
        <name>NADPH</name>
        <dbReference type="ChEBI" id="CHEBI:57783"/>
    </ligand>
</feature>
<feature type="binding site" evidence="1">
    <location>
        <position position="102"/>
    </location>
    <ligand>
        <name>NADPH</name>
        <dbReference type="ChEBI" id="CHEBI:57783"/>
    </ligand>
</feature>
<feature type="binding site" evidence="1">
    <location>
        <begin position="104"/>
        <end position="105"/>
    </location>
    <ligand>
        <name>dTDP-beta-L-rhamnose</name>
        <dbReference type="ChEBI" id="CHEBI:57510"/>
    </ligand>
</feature>
<feature type="binding site" evidence="1">
    <location>
        <position position="129"/>
    </location>
    <ligand>
        <name>NADH</name>
        <dbReference type="ChEBI" id="CHEBI:57945"/>
    </ligand>
</feature>
<feature type="binding site" evidence="1">
    <location>
        <position position="129"/>
    </location>
    <ligand>
        <name>NADPH</name>
        <dbReference type="ChEBI" id="CHEBI:57783"/>
    </ligand>
</feature>
<feature type="binding site" evidence="1">
    <location>
        <position position="133"/>
    </location>
    <ligand>
        <name>NADH</name>
        <dbReference type="ChEBI" id="CHEBI:57945"/>
    </ligand>
</feature>
<feature type="binding site" evidence="1">
    <location>
        <position position="133"/>
    </location>
    <ligand>
        <name>NADPH</name>
        <dbReference type="ChEBI" id="CHEBI:57783"/>
    </ligand>
</feature>
<feature type="binding site" evidence="1">
    <location>
        <position position="155"/>
    </location>
    <ligand>
        <name>dTDP-beta-L-rhamnose</name>
        <dbReference type="ChEBI" id="CHEBI:57510"/>
    </ligand>
</feature>
<feature type="site" description="Could provide a fine-tuning to achieve optimal pKa matching between active site and substrate" evidence="1">
    <location>
        <position position="104"/>
    </location>
</feature>
<dbReference type="EC" id="1.1.1.133" evidence="1"/>
<dbReference type="EMBL" id="AF125322">
    <property type="protein sequence ID" value="AAC63613.1"/>
    <property type="molecule type" value="Genomic_DNA"/>
</dbReference>
<dbReference type="PIR" id="S78543">
    <property type="entry name" value="S78543"/>
</dbReference>
<dbReference type="SMR" id="Q46769"/>
<dbReference type="eggNOG" id="COG1091">
    <property type="taxonomic scope" value="Bacteria"/>
</dbReference>
<dbReference type="UniPathway" id="UPA00124"/>
<dbReference type="UniPathway" id="UPA00281"/>
<dbReference type="GO" id="GO:0005829">
    <property type="term" value="C:cytosol"/>
    <property type="evidence" value="ECO:0007669"/>
    <property type="project" value="TreeGrafter"/>
</dbReference>
<dbReference type="GO" id="GO:0008831">
    <property type="term" value="F:dTDP-4-dehydrorhamnose reductase activity"/>
    <property type="evidence" value="ECO:0000250"/>
    <property type="project" value="UniProtKB"/>
</dbReference>
<dbReference type="GO" id="GO:0046872">
    <property type="term" value="F:metal ion binding"/>
    <property type="evidence" value="ECO:0007669"/>
    <property type="project" value="UniProtKB-KW"/>
</dbReference>
<dbReference type="GO" id="GO:0019305">
    <property type="term" value="P:dTDP-rhamnose biosynthetic process"/>
    <property type="evidence" value="ECO:0007669"/>
    <property type="project" value="UniProtKB-UniPathway"/>
</dbReference>
<dbReference type="GO" id="GO:0009103">
    <property type="term" value="P:lipopolysaccharide biosynthetic process"/>
    <property type="evidence" value="ECO:0000250"/>
    <property type="project" value="UniProtKB"/>
</dbReference>
<dbReference type="GO" id="GO:0009243">
    <property type="term" value="P:O antigen biosynthetic process"/>
    <property type="evidence" value="ECO:0007669"/>
    <property type="project" value="UniProtKB-UniPathway"/>
</dbReference>
<dbReference type="GO" id="GO:0000271">
    <property type="term" value="P:polysaccharide biosynthetic process"/>
    <property type="evidence" value="ECO:0000250"/>
    <property type="project" value="UniProtKB"/>
</dbReference>
<dbReference type="CDD" id="cd05254">
    <property type="entry name" value="dTDP_HR_like_SDR_e"/>
    <property type="match status" value="1"/>
</dbReference>
<dbReference type="Gene3D" id="3.40.50.720">
    <property type="entry name" value="NAD(P)-binding Rossmann-like Domain"/>
    <property type="match status" value="1"/>
</dbReference>
<dbReference type="Gene3D" id="3.90.25.10">
    <property type="entry name" value="UDP-galactose 4-epimerase, domain 1"/>
    <property type="match status" value="1"/>
</dbReference>
<dbReference type="InterPro" id="IPR005913">
    <property type="entry name" value="dTDP_dehydrorham_reduct"/>
</dbReference>
<dbReference type="InterPro" id="IPR036291">
    <property type="entry name" value="NAD(P)-bd_dom_sf"/>
</dbReference>
<dbReference type="InterPro" id="IPR029903">
    <property type="entry name" value="RmlD-like-bd"/>
</dbReference>
<dbReference type="NCBIfam" id="NF007440">
    <property type="entry name" value="PRK09987.1"/>
    <property type="match status" value="1"/>
</dbReference>
<dbReference type="NCBIfam" id="TIGR01214">
    <property type="entry name" value="rmlD"/>
    <property type="match status" value="1"/>
</dbReference>
<dbReference type="PANTHER" id="PTHR10491">
    <property type="entry name" value="DTDP-4-DEHYDRORHAMNOSE REDUCTASE"/>
    <property type="match status" value="1"/>
</dbReference>
<dbReference type="PANTHER" id="PTHR10491:SF4">
    <property type="entry name" value="METHIONINE ADENOSYLTRANSFERASE 2 SUBUNIT BETA"/>
    <property type="match status" value="1"/>
</dbReference>
<dbReference type="Pfam" id="PF04321">
    <property type="entry name" value="RmlD_sub_bind"/>
    <property type="match status" value="1"/>
</dbReference>
<dbReference type="SUPFAM" id="SSF51735">
    <property type="entry name" value="NAD(P)-binding Rossmann-fold domains"/>
    <property type="match status" value="1"/>
</dbReference>
<protein>
    <recommendedName>
        <fullName evidence="1">dTDP-4-dehydrorhamnose reductase</fullName>
        <ecNumber evidence="1">1.1.1.133</ecNumber>
    </recommendedName>
    <alternativeName>
        <fullName evidence="1">dTDP-4-keto-L-rhamnose reductase</fullName>
    </alternativeName>
    <alternativeName>
        <fullName evidence="3">dTDP-6-deoxy-L-lyxo-4-hexulose reductase</fullName>
    </alternativeName>
    <alternativeName>
        <fullName evidence="1">dTDP-6-deoxy-L-mannose dehydrogenase</fullName>
    </alternativeName>
    <alternativeName>
        <fullName evidence="1">dTDP-L-rhamnose synthase</fullName>
    </alternativeName>
</protein>
<gene>
    <name evidence="3" type="primary">rfbD</name>
    <name type="synonym">rmlD</name>
</gene>
<reference key="1">
    <citation type="journal article" date="1995" name="J. Bacteriol.">
        <title>Genetic analysis of the dTDP-rhamnose biosynthesis region of the Escherichia coli VW187 (O7:K1) rfb gene cluster: identification of functional homologs of rfbB and rfbA in the rff cluster and correct location of the rffE gene.</title>
        <authorList>
            <person name="Marolda C.L."/>
            <person name="Valvano M.A."/>
        </authorList>
    </citation>
    <scope>NUCLEOTIDE SEQUENCE [GENOMIC DNA]</scope>
    <scope>FUNCTION IN DTDP-RHAMNOSE BIOSYNTHESIS</scope>
    <scope>PATHWAY</scope>
    <source>
        <strain>O7:K1 / VW187</strain>
    </source>
</reference>
<name>RMLD_ECOLX</name>
<accession>Q46769</accession>
<comment type="function">
    <text evidence="1 2">Involved in the biosynthesis of the dTDP-L-rhamnose which is an important component of lipopolysaccharide (LPS) (PubMed:7559340). Catalyzes the reduction of dTDP-6-deoxy-L-lyxo-4-hexulose to yield dTDP-L-rhamnose (By similarity). RmlD uses NADH and NADPH nearly equally well (By similarity).</text>
</comment>
<comment type="catalytic activity">
    <reaction evidence="1">
        <text>dTDP-beta-L-rhamnose + NADP(+) = dTDP-4-dehydro-beta-L-rhamnose + NADPH + H(+)</text>
        <dbReference type="Rhea" id="RHEA:21796"/>
        <dbReference type="ChEBI" id="CHEBI:15378"/>
        <dbReference type="ChEBI" id="CHEBI:57510"/>
        <dbReference type="ChEBI" id="CHEBI:57783"/>
        <dbReference type="ChEBI" id="CHEBI:58349"/>
        <dbReference type="ChEBI" id="CHEBI:62830"/>
        <dbReference type="EC" id="1.1.1.133"/>
    </reaction>
</comment>
<comment type="cofactor">
    <cofactor evidence="1">
        <name>Mg(2+)</name>
        <dbReference type="ChEBI" id="CHEBI:18420"/>
    </cofactor>
    <text evidence="1">Binds 1 Mg(2+) ion per monomer.</text>
</comment>
<comment type="pathway">
    <text evidence="5">Carbohydrate biosynthesis; dTDP-L-rhamnose biosynthesis.</text>
</comment>
<comment type="pathway">
    <text evidence="5">Bacterial outer membrane biogenesis; LPS O-antigen biosynthesis.</text>
</comment>
<comment type="subunit">
    <text evidence="1">Homodimer.</text>
</comment>
<comment type="similarity">
    <text evidence="4">Belongs to the dTDP-4-dehydrorhamnose reductase family.</text>
</comment>
<organism>
    <name type="scientific">Escherichia coli</name>
    <dbReference type="NCBI Taxonomy" id="562"/>
    <lineage>
        <taxon>Bacteria</taxon>
        <taxon>Pseudomonadati</taxon>
        <taxon>Pseudomonadota</taxon>
        <taxon>Gammaproteobacteria</taxon>
        <taxon>Enterobacterales</taxon>
        <taxon>Enterobacteriaceae</taxon>
        <taxon>Escherichia</taxon>
    </lineage>
</organism>
<proteinExistence type="evidence at protein level"/>